<proteinExistence type="inferred from homology"/>
<reference key="1">
    <citation type="journal article" date="2007" name="ISME J.">
        <title>Population level functional diversity in a microbial community revealed by comparative genomic and metagenomic analyses.</title>
        <authorList>
            <person name="Bhaya D."/>
            <person name="Grossman A.R."/>
            <person name="Steunou A.-S."/>
            <person name="Khuri N."/>
            <person name="Cohan F.M."/>
            <person name="Hamamura N."/>
            <person name="Melendrez M.C."/>
            <person name="Bateson M.M."/>
            <person name="Ward D.M."/>
            <person name="Heidelberg J.F."/>
        </authorList>
    </citation>
    <scope>NUCLEOTIDE SEQUENCE [LARGE SCALE GENOMIC DNA]</scope>
    <source>
        <strain>JA-2-3B'a(2-13)</strain>
    </source>
</reference>
<keyword id="KW-1283">Bacterial microcompartment</keyword>
<keyword id="KW-0113">Calvin cycle</keyword>
<keyword id="KW-0120">Carbon dioxide fixation</keyword>
<keyword id="KW-1282">Carboxysome</keyword>
<keyword id="KW-1015">Disulfide bond</keyword>
<keyword id="KW-0456">Lyase</keyword>
<keyword id="KW-0460">Magnesium</keyword>
<keyword id="KW-0479">Metal-binding</keyword>
<keyword id="KW-0503">Monooxygenase</keyword>
<keyword id="KW-0560">Oxidoreductase</keyword>
<keyword id="KW-0601">Photorespiration</keyword>
<keyword id="KW-0602">Photosynthesis</keyword>
<keyword id="KW-1185">Reference proteome</keyword>
<evidence type="ECO:0000255" key="1">
    <source>
        <dbReference type="HAMAP-Rule" id="MF_01338"/>
    </source>
</evidence>
<dbReference type="EC" id="4.1.1.39" evidence="1"/>
<dbReference type="EMBL" id="CP000240">
    <property type="protein sequence ID" value="ABD03511.1"/>
    <property type="molecule type" value="Genomic_DNA"/>
</dbReference>
<dbReference type="SMR" id="Q2JIP3"/>
<dbReference type="STRING" id="321332.CYB_2579"/>
<dbReference type="KEGG" id="cyb:CYB_2579"/>
<dbReference type="eggNOG" id="COG1850">
    <property type="taxonomic scope" value="Bacteria"/>
</dbReference>
<dbReference type="HOGENOM" id="CLU_031450_2_0_3"/>
<dbReference type="Proteomes" id="UP000001938">
    <property type="component" value="Chromosome"/>
</dbReference>
<dbReference type="GO" id="GO:0031470">
    <property type="term" value="C:carboxysome"/>
    <property type="evidence" value="ECO:0007669"/>
    <property type="project" value="UniProtKB-SubCell"/>
</dbReference>
<dbReference type="GO" id="GO:0000287">
    <property type="term" value="F:magnesium ion binding"/>
    <property type="evidence" value="ECO:0007669"/>
    <property type="project" value="UniProtKB-UniRule"/>
</dbReference>
<dbReference type="GO" id="GO:0004497">
    <property type="term" value="F:monooxygenase activity"/>
    <property type="evidence" value="ECO:0007669"/>
    <property type="project" value="UniProtKB-KW"/>
</dbReference>
<dbReference type="GO" id="GO:0016984">
    <property type="term" value="F:ribulose-bisphosphate carboxylase activity"/>
    <property type="evidence" value="ECO:0007669"/>
    <property type="project" value="UniProtKB-UniRule"/>
</dbReference>
<dbReference type="GO" id="GO:0009853">
    <property type="term" value="P:photorespiration"/>
    <property type="evidence" value="ECO:0007669"/>
    <property type="project" value="UniProtKB-KW"/>
</dbReference>
<dbReference type="GO" id="GO:0019253">
    <property type="term" value="P:reductive pentose-phosphate cycle"/>
    <property type="evidence" value="ECO:0007669"/>
    <property type="project" value="UniProtKB-UniRule"/>
</dbReference>
<dbReference type="CDD" id="cd08212">
    <property type="entry name" value="RuBisCO_large_I"/>
    <property type="match status" value="1"/>
</dbReference>
<dbReference type="Gene3D" id="3.20.20.110">
    <property type="entry name" value="Ribulose bisphosphate carboxylase, large subunit, C-terminal domain"/>
    <property type="match status" value="1"/>
</dbReference>
<dbReference type="Gene3D" id="3.30.70.150">
    <property type="entry name" value="RuBisCO large subunit, N-terminal domain"/>
    <property type="match status" value="1"/>
</dbReference>
<dbReference type="HAMAP" id="MF_01338">
    <property type="entry name" value="RuBisCO_L_type1"/>
    <property type="match status" value="1"/>
</dbReference>
<dbReference type="InterPro" id="IPR033966">
    <property type="entry name" value="RuBisCO"/>
</dbReference>
<dbReference type="InterPro" id="IPR020878">
    <property type="entry name" value="RuBisCo_large_chain_AS"/>
</dbReference>
<dbReference type="InterPro" id="IPR000685">
    <property type="entry name" value="RuBisCO_lsu_C"/>
</dbReference>
<dbReference type="InterPro" id="IPR036376">
    <property type="entry name" value="RuBisCO_lsu_C_sf"/>
</dbReference>
<dbReference type="InterPro" id="IPR017443">
    <property type="entry name" value="RuBisCO_lsu_fd_N"/>
</dbReference>
<dbReference type="InterPro" id="IPR036422">
    <property type="entry name" value="RuBisCO_lsu_N_sf"/>
</dbReference>
<dbReference type="InterPro" id="IPR020888">
    <property type="entry name" value="RuBisCO_lsuI"/>
</dbReference>
<dbReference type="NCBIfam" id="NF003252">
    <property type="entry name" value="PRK04208.1"/>
    <property type="match status" value="1"/>
</dbReference>
<dbReference type="PANTHER" id="PTHR42704">
    <property type="entry name" value="RIBULOSE BISPHOSPHATE CARBOXYLASE"/>
    <property type="match status" value="1"/>
</dbReference>
<dbReference type="PANTHER" id="PTHR42704:SF17">
    <property type="entry name" value="RIBULOSE BISPHOSPHATE CARBOXYLASE LARGE CHAIN"/>
    <property type="match status" value="1"/>
</dbReference>
<dbReference type="Pfam" id="PF00016">
    <property type="entry name" value="RuBisCO_large"/>
    <property type="match status" value="1"/>
</dbReference>
<dbReference type="Pfam" id="PF02788">
    <property type="entry name" value="RuBisCO_large_N"/>
    <property type="match status" value="1"/>
</dbReference>
<dbReference type="SFLD" id="SFLDG01052">
    <property type="entry name" value="RuBisCO"/>
    <property type="match status" value="1"/>
</dbReference>
<dbReference type="SFLD" id="SFLDS00014">
    <property type="entry name" value="RuBisCO"/>
    <property type="match status" value="1"/>
</dbReference>
<dbReference type="SFLD" id="SFLDG00301">
    <property type="entry name" value="RuBisCO-like_proteins"/>
    <property type="match status" value="1"/>
</dbReference>
<dbReference type="SUPFAM" id="SSF51649">
    <property type="entry name" value="RuBisCo, C-terminal domain"/>
    <property type="match status" value="1"/>
</dbReference>
<dbReference type="SUPFAM" id="SSF54966">
    <property type="entry name" value="RuBisCO, large subunit, small (N-terminal) domain"/>
    <property type="match status" value="1"/>
</dbReference>
<dbReference type="PROSITE" id="PS00157">
    <property type="entry name" value="RUBISCO_LARGE"/>
    <property type="match status" value="1"/>
</dbReference>
<feature type="chain" id="PRO_0000251462" description="Ribulose bisphosphate carboxylase large chain">
    <location>
        <begin position="1"/>
        <end position="474"/>
    </location>
</feature>
<feature type="active site" description="Proton acceptor" evidence="1">
    <location>
        <position position="174"/>
    </location>
</feature>
<feature type="active site" description="Proton acceptor" evidence="1">
    <location>
        <position position="293"/>
    </location>
</feature>
<feature type="binding site" description="in homodimeric partner" evidence="1">
    <location>
        <position position="122"/>
    </location>
    <ligand>
        <name>substrate</name>
    </ligand>
</feature>
<feature type="binding site" evidence="1">
    <location>
        <position position="172"/>
    </location>
    <ligand>
        <name>substrate</name>
    </ligand>
</feature>
<feature type="binding site" evidence="1">
    <location>
        <position position="176"/>
    </location>
    <ligand>
        <name>substrate</name>
    </ligand>
</feature>
<feature type="binding site" description="via carbamate group" evidence="1">
    <location>
        <position position="200"/>
    </location>
    <ligand>
        <name>Mg(2+)</name>
        <dbReference type="ChEBI" id="CHEBI:18420"/>
    </ligand>
</feature>
<feature type="binding site" evidence="1">
    <location>
        <position position="202"/>
    </location>
    <ligand>
        <name>Mg(2+)</name>
        <dbReference type="ChEBI" id="CHEBI:18420"/>
    </ligand>
</feature>
<feature type="binding site" evidence="1">
    <location>
        <position position="203"/>
    </location>
    <ligand>
        <name>Mg(2+)</name>
        <dbReference type="ChEBI" id="CHEBI:18420"/>
    </ligand>
</feature>
<feature type="binding site" evidence="1">
    <location>
        <position position="294"/>
    </location>
    <ligand>
        <name>substrate</name>
    </ligand>
</feature>
<feature type="binding site" evidence="1">
    <location>
        <position position="326"/>
    </location>
    <ligand>
        <name>substrate</name>
    </ligand>
</feature>
<feature type="binding site" evidence="1">
    <location>
        <position position="378"/>
    </location>
    <ligand>
        <name>substrate</name>
    </ligand>
</feature>
<feature type="site" description="Transition state stabilizer" evidence="1">
    <location>
        <position position="333"/>
    </location>
</feature>
<feature type="modified residue" description="N6-carboxylysine" evidence="1">
    <location>
        <position position="200"/>
    </location>
</feature>
<feature type="disulfide bond" description="Interchain; in linked form" evidence="1">
    <location>
        <position position="246"/>
    </location>
</feature>
<sequence>MAYSATQSKSGYQAGVKDYRLTYYTPDYTPKDTDVLACFRVTPQPGVPPEEAGAAVAAESSTGTWTTVWTDLLTDLDRYKGRCYDIEPVPGEDNQYFCFVAYPLDLFEEGSVTNMLTSIVGNVFGFKALKALRLEDVRIPVAYLKTFQGPPHGIQVERDKLNKYGRPLLGCTIKPKLGLSAKNYGRAVYEALRGGLDFTKDDENINSQPFQRWRDRYLFVMEAVHKAQAETGEIKGHYLNVTAPTCEEMFKRAEFAKELGAPIIMHDYLTAGFTANTSLAKWCRDNGILLHIHRAMHAVIDRQKNHGIHFRVLAKCLRMSGGDHLHSGTVVGKLEGDRAITMGFVDLMRENYVEADRSRGIFFTQDWASMPGVMPVASGGIHVWHMPALVEIFGDDSVLQFGGGTLGHPWGNAPGATANRVALEACIQARNEGRDLAREGNDIIREAAKWSPELAAACELWKEIKFEFKAVDTL</sequence>
<name>RBL_SYNJB</name>
<comment type="function">
    <text evidence="1">RuBisCO catalyzes two reactions: the carboxylation of D-ribulose 1,5-bisphosphate, the primary event in carbon dioxide fixation, as well as the oxidative fragmentation of the pentose substrate in the photorespiration process. Both reactions occur simultaneously and in competition at the same active site.</text>
</comment>
<comment type="catalytic activity">
    <reaction evidence="1">
        <text>2 (2R)-3-phosphoglycerate + 2 H(+) = D-ribulose 1,5-bisphosphate + CO2 + H2O</text>
        <dbReference type="Rhea" id="RHEA:23124"/>
        <dbReference type="ChEBI" id="CHEBI:15377"/>
        <dbReference type="ChEBI" id="CHEBI:15378"/>
        <dbReference type="ChEBI" id="CHEBI:16526"/>
        <dbReference type="ChEBI" id="CHEBI:57870"/>
        <dbReference type="ChEBI" id="CHEBI:58272"/>
        <dbReference type="EC" id="4.1.1.39"/>
    </reaction>
</comment>
<comment type="catalytic activity">
    <reaction evidence="1">
        <text>D-ribulose 1,5-bisphosphate + O2 = 2-phosphoglycolate + (2R)-3-phosphoglycerate + 2 H(+)</text>
        <dbReference type="Rhea" id="RHEA:36631"/>
        <dbReference type="ChEBI" id="CHEBI:15378"/>
        <dbReference type="ChEBI" id="CHEBI:15379"/>
        <dbReference type="ChEBI" id="CHEBI:57870"/>
        <dbReference type="ChEBI" id="CHEBI:58033"/>
        <dbReference type="ChEBI" id="CHEBI:58272"/>
    </reaction>
</comment>
<comment type="cofactor">
    <cofactor evidence="1">
        <name>Mg(2+)</name>
        <dbReference type="ChEBI" id="CHEBI:18420"/>
    </cofactor>
    <text evidence="1">Binds 1 Mg(2+) ion per subunit.</text>
</comment>
<comment type="subunit">
    <text evidence="1">Heterohexadecamer of 8 large chains and 8 small chains; disulfide-linked. The disulfide link is formed within the large subunit homodimers.</text>
</comment>
<comment type="subcellular location">
    <subcellularLocation>
        <location evidence="1">Carboxysome</location>
    </subcellularLocation>
</comment>
<comment type="PTM">
    <text evidence="1">The disulfide bond which can form in the large chain dimeric partners within the hexadecamer appears to be associated with oxidative stress and protein turnover.</text>
</comment>
<comment type="miscellaneous">
    <text evidence="1">The basic functional RuBisCO is composed of a large chain homodimer in a 'head-to-tail' conformation. In form I RuBisCO this homodimer is arranged in a barrel-like tetramer with the small subunits forming a tetrameric 'cap' on each end of the 'barrel'.</text>
</comment>
<comment type="similarity">
    <text evidence="1">Belongs to the RuBisCO large chain family. Type I subfamily.</text>
</comment>
<organism>
    <name type="scientific">Synechococcus sp. (strain JA-2-3B'a(2-13))</name>
    <name type="common">Cyanobacteria bacterium Yellowstone B-Prime</name>
    <dbReference type="NCBI Taxonomy" id="321332"/>
    <lineage>
        <taxon>Bacteria</taxon>
        <taxon>Bacillati</taxon>
        <taxon>Cyanobacteriota</taxon>
        <taxon>Cyanophyceae</taxon>
        <taxon>Synechococcales</taxon>
        <taxon>Synechococcaceae</taxon>
        <taxon>Synechococcus</taxon>
    </lineage>
</organism>
<protein>
    <recommendedName>
        <fullName evidence="1">Ribulose bisphosphate carboxylase large chain</fullName>
        <shortName evidence="1">RuBisCO large subunit</shortName>
        <ecNumber evidence="1">4.1.1.39</ecNumber>
    </recommendedName>
</protein>
<gene>
    <name evidence="1" type="primary">cbbL</name>
    <name evidence="1" type="synonym">rbcL</name>
    <name type="ordered locus">CYB_2579</name>
</gene>
<accession>Q2JIP3</accession>